<name>YIDD_HERAR</name>
<gene>
    <name type="ordered locus">HEAR3470</name>
</gene>
<comment type="function">
    <text evidence="1">Could be involved in insertion of integral membrane proteins into the membrane.</text>
</comment>
<comment type="subcellular location">
    <subcellularLocation>
        <location evidence="1">Cell inner membrane</location>
        <topology evidence="1">Peripheral membrane protein</topology>
        <orientation evidence="1">Cytoplasmic side</orientation>
    </subcellularLocation>
</comment>
<comment type="similarity">
    <text evidence="1">Belongs to the UPF0161 family.</text>
</comment>
<reference key="1">
    <citation type="journal article" date="2007" name="PLoS Genet.">
        <title>A tale of two oxidation states: bacterial colonization of arsenic-rich environments.</title>
        <authorList>
            <person name="Muller D."/>
            <person name="Medigue C."/>
            <person name="Koechler S."/>
            <person name="Barbe V."/>
            <person name="Barakat M."/>
            <person name="Talla E."/>
            <person name="Bonnefoy V."/>
            <person name="Krin E."/>
            <person name="Arsene-Ploetze F."/>
            <person name="Carapito C."/>
            <person name="Chandler M."/>
            <person name="Cournoyer B."/>
            <person name="Cruveiller S."/>
            <person name="Dossat C."/>
            <person name="Duval S."/>
            <person name="Heymann M."/>
            <person name="Leize E."/>
            <person name="Lieutaud A."/>
            <person name="Lievremont D."/>
            <person name="Makita Y."/>
            <person name="Mangenot S."/>
            <person name="Nitschke W."/>
            <person name="Ortet P."/>
            <person name="Perdrial N."/>
            <person name="Schoepp B."/>
            <person name="Siguier P."/>
            <person name="Simeonova D.D."/>
            <person name="Rouy Z."/>
            <person name="Segurens B."/>
            <person name="Turlin E."/>
            <person name="Vallenet D."/>
            <person name="van Dorsselaer A."/>
            <person name="Weiss S."/>
            <person name="Weissenbach J."/>
            <person name="Lett M.-C."/>
            <person name="Danchin A."/>
            <person name="Bertin P.N."/>
        </authorList>
    </citation>
    <scope>NUCLEOTIDE SEQUENCE [LARGE SCALE GENOMIC DNA]</scope>
    <source>
        <strain>ULPAs1</strain>
    </source>
</reference>
<keyword id="KW-0997">Cell inner membrane</keyword>
<keyword id="KW-1003">Cell membrane</keyword>
<keyword id="KW-0472">Membrane</keyword>
<keyword id="KW-1185">Reference proteome</keyword>
<organism>
    <name type="scientific">Herminiimonas arsenicoxydans</name>
    <dbReference type="NCBI Taxonomy" id="204773"/>
    <lineage>
        <taxon>Bacteria</taxon>
        <taxon>Pseudomonadati</taxon>
        <taxon>Pseudomonadota</taxon>
        <taxon>Betaproteobacteria</taxon>
        <taxon>Burkholderiales</taxon>
        <taxon>Oxalobacteraceae</taxon>
        <taxon>Herminiimonas</taxon>
    </lineage>
</organism>
<proteinExistence type="inferred from homology"/>
<accession>A4GAN4</accession>
<evidence type="ECO:0000255" key="1">
    <source>
        <dbReference type="HAMAP-Rule" id="MF_00386"/>
    </source>
</evidence>
<evidence type="ECO:0000256" key="2">
    <source>
        <dbReference type="SAM" id="MobiDB-lite"/>
    </source>
</evidence>
<protein>
    <recommendedName>
        <fullName evidence="1">Putative membrane protein insertion efficiency factor</fullName>
    </recommendedName>
</protein>
<dbReference type="EMBL" id="CU207211">
    <property type="protein sequence ID" value="CAL63571.1"/>
    <property type="molecule type" value="Genomic_DNA"/>
</dbReference>
<dbReference type="STRING" id="204773.HEAR3470"/>
<dbReference type="KEGG" id="har:HEAR3470"/>
<dbReference type="eggNOG" id="COG0759">
    <property type="taxonomic scope" value="Bacteria"/>
</dbReference>
<dbReference type="HOGENOM" id="CLU_144811_2_2_4"/>
<dbReference type="OrthoDB" id="9801753at2"/>
<dbReference type="Proteomes" id="UP000006697">
    <property type="component" value="Chromosome"/>
</dbReference>
<dbReference type="GO" id="GO:0005886">
    <property type="term" value="C:plasma membrane"/>
    <property type="evidence" value="ECO:0007669"/>
    <property type="project" value="UniProtKB-SubCell"/>
</dbReference>
<dbReference type="HAMAP" id="MF_00386">
    <property type="entry name" value="UPF0161_YidD"/>
    <property type="match status" value="1"/>
</dbReference>
<dbReference type="InterPro" id="IPR002696">
    <property type="entry name" value="Membr_insert_effic_factor_YidD"/>
</dbReference>
<dbReference type="NCBIfam" id="TIGR00278">
    <property type="entry name" value="membrane protein insertion efficiency factor YidD"/>
    <property type="match status" value="1"/>
</dbReference>
<dbReference type="PANTHER" id="PTHR33383">
    <property type="entry name" value="MEMBRANE PROTEIN INSERTION EFFICIENCY FACTOR-RELATED"/>
    <property type="match status" value="1"/>
</dbReference>
<dbReference type="PANTHER" id="PTHR33383:SF1">
    <property type="entry name" value="MEMBRANE PROTEIN INSERTION EFFICIENCY FACTOR-RELATED"/>
    <property type="match status" value="1"/>
</dbReference>
<dbReference type="Pfam" id="PF01809">
    <property type="entry name" value="YidD"/>
    <property type="match status" value="1"/>
</dbReference>
<dbReference type="SMART" id="SM01234">
    <property type="entry name" value="Haemolytic"/>
    <property type="match status" value="1"/>
</dbReference>
<sequence length="88" mass="9470">MKTILLLLVRAYQLGISPFLGQNCRFYPSCSAYAFEAIGEYGALKGSFLATKRLCKCHPWHPGGVDPVPKKSSSKKTSSTTACGCGHS</sequence>
<feature type="chain" id="PRO_1000060723" description="Putative membrane protein insertion efficiency factor">
    <location>
        <begin position="1"/>
        <end position="88"/>
    </location>
</feature>
<feature type="region of interest" description="Disordered" evidence="2">
    <location>
        <begin position="64"/>
        <end position="88"/>
    </location>
</feature>